<reference key="1">
    <citation type="journal article" date="2007" name="DNA Res.">
        <title>Complete genomic structure of the bloom-forming toxic cyanobacterium Microcystis aeruginosa NIES-843.</title>
        <authorList>
            <person name="Kaneko T."/>
            <person name="Nakajima N."/>
            <person name="Okamoto S."/>
            <person name="Suzuki I."/>
            <person name="Tanabe Y."/>
            <person name="Tamaoki M."/>
            <person name="Nakamura Y."/>
            <person name="Kasai F."/>
            <person name="Watanabe A."/>
            <person name="Kawashima K."/>
            <person name="Kishida Y."/>
            <person name="Ono A."/>
            <person name="Shimizu Y."/>
            <person name="Takahashi C."/>
            <person name="Minami C."/>
            <person name="Fujishiro T."/>
            <person name="Kohara M."/>
            <person name="Katoh M."/>
            <person name="Nakazaki N."/>
            <person name="Nakayama S."/>
            <person name="Yamada M."/>
            <person name="Tabata S."/>
            <person name="Watanabe M.M."/>
        </authorList>
    </citation>
    <scope>NUCLEOTIDE SEQUENCE [LARGE SCALE GENOMIC DNA]</scope>
    <source>
        <strain>NIES-843 / IAM M-247</strain>
    </source>
</reference>
<name>LEUC_MICAN</name>
<comment type="function">
    <text evidence="1">Catalyzes the isomerization between 2-isopropylmalate and 3-isopropylmalate, via the formation of 2-isopropylmaleate.</text>
</comment>
<comment type="catalytic activity">
    <reaction evidence="1">
        <text>(2R,3S)-3-isopropylmalate = (2S)-2-isopropylmalate</text>
        <dbReference type="Rhea" id="RHEA:32287"/>
        <dbReference type="ChEBI" id="CHEBI:1178"/>
        <dbReference type="ChEBI" id="CHEBI:35121"/>
        <dbReference type="EC" id="4.2.1.33"/>
    </reaction>
</comment>
<comment type="cofactor">
    <cofactor evidence="1">
        <name>[4Fe-4S] cluster</name>
        <dbReference type="ChEBI" id="CHEBI:49883"/>
    </cofactor>
    <text evidence="1">Binds 1 [4Fe-4S] cluster per subunit.</text>
</comment>
<comment type="pathway">
    <text evidence="1">Amino-acid biosynthesis; L-leucine biosynthesis; L-leucine from 3-methyl-2-oxobutanoate: step 2/4.</text>
</comment>
<comment type="subunit">
    <text evidence="1">Heterodimer of LeuC and LeuD.</text>
</comment>
<comment type="similarity">
    <text evidence="1">Belongs to the aconitase/IPM isomerase family. LeuC type 1 subfamily.</text>
</comment>
<keyword id="KW-0004">4Fe-4S</keyword>
<keyword id="KW-0028">Amino-acid biosynthesis</keyword>
<keyword id="KW-0100">Branched-chain amino acid biosynthesis</keyword>
<keyword id="KW-0408">Iron</keyword>
<keyword id="KW-0411">Iron-sulfur</keyword>
<keyword id="KW-0432">Leucine biosynthesis</keyword>
<keyword id="KW-0456">Lyase</keyword>
<keyword id="KW-0479">Metal-binding</keyword>
<protein>
    <recommendedName>
        <fullName evidence="1">3-isopropylmalate dehydratase large subunit</fullName>
        <ecNumber evidence="1">4.2.1.33</ecNumber>
    </recommendedName>
    <alternativeName>
        <fullName evidence="1">Alpha-IPM isomerase</fullName>
        <shortName evidence="1">IPMI</shortName>
    </alternativeName>
    <alternativeName>
        <fullName evidence="1">Isopropylmalate isomerase</fullName>
    </alternativeName>
</protein>
<organism>
    <name type="scientific">Microcystis aeruginosa (strain NIES-843 / IAM M-2473)</name>
    <dbReference type="NCBI Taxonomy" id="449447"/>
    <lineage>
        <taxon>Bacteria</taxon>
        <taxon>Bacillati</taxon>
        <taxon>Cyanobacteriota</taxon>
        <taxon>Cyanophyceae</taxon>
        <taxon>Oscillatoriophycideae</taxon>
        <taxon>Chroococcales</taxon>
        <taxon>Microcystaceae</taxon>
        <taxon>Microcystis</taxon>
    </lineage>
</organism>
<sequence length="466" mass="50638">MSARTLFDKVWDAHTVKILPSGQTQLFIGLHLVHEVTSPQAFSMLRERGLKVLFPRRTIATVDHIVPTENQARPFLDDLAEEMIRAIETNVQTNHIPFYGIGSGNQGIVHVIAPEQGLTQPGMTIACGDSHTSTHGAFGAIAFGIGTSQVRDVLATQTLSLSKLKVRRVEVNGDLNPGVYAKDVILHIIRQLGVKGGVGYAYEYAGSTIERMSMEERMTICNMAIEGGARCGYINPDQITYDYLKGRDFAPKDWESAVNWWESIKSDADAVYDDVVVFDAGEIEPTVTWGITPGQGIGVNEVIPTPESLPASERAIAEEAYQYMKLTPGAPIKGTKIDVCFVGSCTNGRISDLREAAKFAQGHRVAPHVKAFIVPGSERVKKQAEAEGLDQIFLASGFEWREAGCSMCLAMNPDKLQGDQISASSSNRNFKGRQGSASGRTLLMSPAMVVAAAIKGEVTDPRELLN</sequence>
<accession>B0JY97</accession>
<proteinExistence type="inferred from homology"/>
<dbReference type="EC" id="4.2.1.33" evidence="1"/>
<dbReference type="EMBL" id="AP009552">
    <property type="protein sequence ID" value="BAG05135.1"/>
    <property type="molecule type" value="Genomic_DNA"/>
</dbReference>
<dbReference type="RefSeq" id="WP_012267669.1">
    <property type="nucleotide sequence ID" value="NC_010296.1"/>
</dbReference>
<dbReference type="SMR" id="B0JY97"/>
<dbReference type="STRING" id="449447.MAE_53130"/>
<dbReference type="PaxDb" id="449447-MAE_53130"/>
<dbReference type="EnsemblBacteria" id="BAG05135">
    <property type="protein sequence ID" value="BAG05135"/>
    <property type="gene ID" value="MAE_53130"/>
</dbReference>
<dbReference type="KEGG" id="mar:MAE_53130"/>
<dbReference type="PATRIC" id="fig|449447.4.peg.4841"/>
<dbReference type="eggNOG" id="COG0065">
    <property type="taxonomic scope" value="Bacteria"/>
</dbReference>
<dbReference type="HOGENOM" id="CLU_006714_3_4_3"/>
<dbReference type="BioCyc" id="MAER449447:MAE_RS23120-MONOMER"/>
<dbReference type="UniPathway" id="UPA00048">
    <property type="reaction ID" value="UER00071"/>
</dbReference>
<dbReference type="Proteomes" id="UP000001510">
    <property type="component" value="Chromosome"/>
</dbReference>
<dbReference type="GO" id="GO:0003861">
    <property type="term" value="F:3-isopropylmalate dehydratase activity"/>
    <property type="evidence" value="ECO:0007669"/>
    <property type="project" value="UniProtKB-UniRule"/>
</dbReference>
<dbReference type="GO" id="GO:0051539">
    <property type="term" value="F:4 iron, 4 sulfur cluster binding"/>
    <property type="evidence" value="ECO:0007669"/>
    <property type="project" value="UniProtKB-KW"/>
</dbReference>
<dbReference type="GO" id="GO:0046872">
    <property type="term" value="F:metal ion binding"/>
    <property type="evidence" value="ECO:0007669"/>
    <property type="project" value="UniProtKB-KW"/>
</dbReference>
<dbReference type="GO" id="GO:0009098">
    <property type="term" value="P:L-leucine biosynthetic process"/>
    <property type="evidence" value="ECO:0007669"/>
    <property type="project" value="UniProtKB-UniRule"/>
</dbReference>
<dbReference type="CDD" id="cd01583">
    <property type="entry name" value="IPMI"/>
    <property type="match status" value="1"/>
</dbReference>
<dbReference type="Gene3D" id="3.30.499.10">
    <property type="entry name" value="Aconitase, domain 3"/>
    <property type="match status" value="2"/>
</dbReference>
<dbReference type="HAMAP" id="MF_01026">
    <property type="entry name" value="LeuC_type1"/>
    <property type="match status" value="1"/>
</dbReference>
<dbReference type="InterPro" id="IPR004430">
    <property type="entry name" value="3-IsopropMal_deHydase_lsu"/>
</dbReference>
<dbReference type="InterPro" id="IPR015931">
    <property type="entry name" value="Acnase/IPM_dHydase_lsu_aba_1/3"/>
</dbReference>
<dbReference type="InterPro" id="IPR001030">
    <property type="entry name" value="Acoase/IPM_deHydtase_lsu_aba"/>
</dbReference>
<dbReference type="InterPro" id="IPR018136">
    <property type="entry name" value="Aconitase_4Fe-4S_BS"/>
</dbReference>
<dbReference type="InterPro" id="IPR036008">
    <property type="entry name" value="Aconitase_4Fe-4S_dom"/>
</dbReference>
<dbReference type="InterPro" id="IPR050067">
    <property type="entry name" value="IPM_dehydratase_rel_enz"/>
</dbReference>
<dbReference type="InterPro" id="IPR033941">
    <property type="entry name" value="IPMI_cat"/>
</dbReference>
<dbReference type="NCBIfam" id="TIGR00170">
    <property type="entry name" value="leuC"/>
    <property type="match status" value="1"/>
</dbReference>
<dbReference type="NCBIfam" id="NF004016">
    <property type="entry name" value="PRK05478.1"/>
    <property type="match status" value="1"/>
</dbReference>
<dbReference type="NCBIfam" id="NF009116">
    <property type="entry name" value="PRK12466.1"/>
    <property type="match status" value="1"/>
</dbReference>
<dbReference type="PANTHER" id="PTHR43822:SF9">
    <property type="entry name" value="3-ISOPROPYLMALATE DEHYDRATASE"/>
    <property type="match status" value="1"/>
</dbReference>
<dbReference type="PANTHER" id="PTHR43822">
    <property type="entry name" value="HOMOACONITASE, MITOCHONDRIAL-RELATED"/>
    <property type="match status" value="1"/>
</dbReference>
<dbReference type="Pfam" id="PF00330">
    <property type="entry name" value="Aconitase"/>
    <property type="match status" value="1"/>
</dbReference>
<dbReference type="PRINTS" id="PR00415">
    <property type="entry name" value="ACONITASE"/>
</dbReference>
<dbReference type="SUPFAM" id="SSF53732">
    <property type="entry name" value="Aconitase iron-sulfur domain"/>
    <property type="match status" value="1"/>
</dbReference>
<dbReference type="PROSITE" id="PS00450">
    <property type="entry name" value="ACONITASE_1"/>
    <property type="match status" value="1"/>
</dbReference>
<dbReference type="PROSITE" id="PS01244">
    <property type="entry name" value="ACONITASE_2"/>
    <property type="match status" value="1"/>
</dbReference>
<evidence type="ECO:0000255" key="1">
    <source>
        <dbReference type="HAMAP-Rule" id="MF_01026"/>
    </source>
</evidence>
<gene>
    <name evidence="1" type="primary">leuC</name>
    <name type="ordered locus">MAE_53130</name>
</gene>
<feature type="chain" id="PRO_1000084216" description="3-isopropylmalate dehydratase large subunit">
    <location>
        <begin position="1"/>
        <end position="466"/>
    </location>
</feature>
<feature type="binding site" evidence="1">
    <location>
        <position position="345"/>
    </location>
    <ligand>
        <name>[4Fe-4S] cluster</name>
        <dbReference type="ChEBI" id="CHEBI:49883"/>
    </ligand>
</feature>
<feature type="binding site" evidence="1">
    <location>
        <position position="405"/>
    </location>
    <ligand>
        <name>[4Fe-4S] cluster</name>
        <dbReference type="ChEBI" id="CHEBI:49883"/>
    </ligand>
</feature>
<feature type="binding site" evidence="1">
    <location>
        <position position="408"/>
    </location>
    <ligand>
        <name>[4Fe-4S] cluster</name>
        <dbReference type="ChEBI" id="CHEBI:49883"/>
    </ligand>
</feature>